<accession>Q5XUC7</accession>
<comment type="function">
    <text evidence="1">Component of the ribosome, a large ribonucleoprotein complex responsible for the synthesis of proteins in the cell. The small ribosomal subunit (SSU) binds messenger RNAs (mRNAs) and translates the encoded message by selecting cognate aminoacyl-transfer RNA (tRNA) molecules. The large subunit (LSU) contains the ribosomal catalytic site termed the peptidyl transferase center (PTC), which catalyzes the formation of peptide bonds, thereby polymerizing the amino acids delivered by tRNAs into a polypeptide chain. The nascent polypeptides leave the ribosome through a tunnel in the LSU and interact with protein factors that function in enzymatic processing, targeting, and the membrane insertion of nascent chains at the exit of the ribosomal tunnel.</text>
</comment>
<comment type="subunit">
    <text evidence="1">Component of the large ribosomal subunit (LSU).</text>
</comment>
<comment type="subcellular location">
    <subcellularLocation>
        <location evidence="1">Cytoplasm</location>
    </subcellularLocation>
    <subcellularLocation>
        <location evidence="1">Nucleus</location>
    </subcellularLocation>
</comment>
<comment type="similarity">
    <text evidence="3">Belongs to the universal ribosomal protein uL18 family.</text>
</comment>
<feature type="chain" id="PRO_0000291561" description="Large ribosomal subunit protein uL18">
    <location>
        <begin position="1"/>
        <end position="300"/>
    </location>
</feature>
<feature type="region of interest" description="Disordered" evidence="2">
    <location>
        <begin position="246"/>
        <end position="276"/>
    </location>
</feature>
<feature type="compositionally biased region" description="Basic and acidic residues" evidence="2">
    <location>
        <begin position="246"/>
        <end position="267"/>
    </location>
</feature>
<proteinExistence type="evidence at transcript level"/>
<reference key="1">
    <citation type="submission" date="2004-08" db="EMBL/GenBank/DDBJ databases">
        <authorList>
            <person name="Hunter W.B."/>
            <person name="Dang P.M."/>
        </authorList>
    </citation>
    <scope>NUCLEOTIDE SEQUENCE [MRNA]</scope>
</reference>
<name>RL5_TOXCI</name>
<keyword id="KW-0963">Cytoplasm</keyword>
<keyword id="KW-0539">Nucleus</keyword>
<keyword id="KW-0687">Ribonucleoprotein</keyword>
<keyword id="KW-0689">Ribosomal protein</keyword>
<keyword id="KW-0694">RNA-binding</keyword>
<keyword id="KW-0699">rRNA-binding</keyword>
<evidence type="ECO:0000250" key="1">
    <source>
        <dbReference type="UniProtKB" id="P26321"/>
    </source>
</evidence>
<evidence type="ECO:0000256" key="2">
    <source>
        <dbReference type="SAM" id="MobiDB-lite"/>
    </source>
</evidence>
<evidence type="ECO:0000305" key="3"/>
<organism>
    <name type="scientific">Toxoptera citricida</name>
    <name type="common">Brown citrus aphid</name>
    <name type="synonym">Aphis citricidus</name>
    <dbReference type="NCBI Taxonomy" id="223852"/>
    <lineage>
        <taxon>Eukaryota</taxon>
        <taxon>Metazoa</taxon>
        <taxon>Ecdysozoa</taxon>
        <taxon>Arthropoda</taxon>
        <taxon>Hexapoda</taxon>
        <taxon>Insecta</taxon>
        <taxon>Pterygota</taxon>
        <taxon>Neoptera</taxon>
        <taxon>Paraneoptera</taxon>
        <taxon>Hemiptera</taxon>
        <taxon>Sternorrhyncha</taxon>
        <taxon>Aphidomorpha</taxon>
        <taxon>Aphidoidea</taxon>
        <taxon>Aphididae</taxon>
        <taxon>Aphidini</taxon>
        <taxon>Aphis</taxon>
        <taxon>Toxoptera</taxon>
    </lineage>
</organism>
<dbReference type="EMBL" id="AY737527">
    <property type="protein sequence ID" value="AAU84920.1"/>
    <property type="molecule type" value="mRNA"/>
</dbReference>
<dbReference type="SMR" id="Q5XUC7"/>
<dbReference type="GO" id="GO:0022625">
    <property type="term" value="C:cytosolic large ribosomal subunit"/>
    <property type="evidence" value="ECO:0007669"/>
    <property type="project" value="TreeGrafter"/>
</dbReference>
<dbReference type="GO" id="GO:0005634">
    <property type="term" value="C:nucleus"/>
    <property type="evidence" value="ECO:0007669"/>
    <property type="project" value="UniProtKB-SubCell"/>
</dbReference>
<dbReference type="GO" id="GO:0008097">
    <property type="term" value="F:5S rRNA binding"/>
    <property type="evidence" value="ECO:0007669"/>
    <property type="project" value="InterPro"/>
</dbReference>
<dbReference type="GO" id="GO:0003735">
    <property type="term" value="F:structural constituent of ribosome"/>
    <property type="evidence" value="ECO:0007669"/>
    <property type="project" value="InterPro"/>
</dbReference>
<dbReference type="GO" id="GO:0000027">
    <property type="term" value="P:ribosomal large subunit assembly"/>
    <property type="evidence" value="ECO:0007669"/>
    <property type="project" value="TreeGrafter"/>
</dbReference>
<dbReference type="GO" id="GO:0006412">
    <property type="term" value="P:translation"/>
    <property type="evidence" value="ECO:0007669"/>
    <property type="project" value="InterPro"/>
</dbReference>
<dbReference type="CDD" id="cd00432">
    <property type="entry name" value="Ribosomal_L18_L5e"/>
    <property type="match status" value="1"/>
</dbReference>
<dbReference type="FunFam" id="3.30.420.100:FF:000002">
    <property type="entry name" value="60S ribosomal protein L5"/>
    <property type="match status" value="1"/>
</dbReference>
<dbReference type="Gene3D" id="3.30.420.100">
    <property type="match status" value="1"/>
</dbReference>
<dbReference type="HAMAP" id="MF_01337_A">
    <property type="entry name" value="Ribosomal_uL18_A"/>
    <property type="match status" value="1"/>
</dbReference>
<dbReference type="InterPro" id="IPR005485">
    <property type="entry name" value="Rbsml_uL18_euk"/>
</dbReference>
<dbReference type="InterPro" id="IPR025607">
    <property type="entry name" value="Ribosomal_uL18_C_euk"/>
</dbReference>
<dbReference type="PANTHER" id="PTHR23410:SF12">
    <property type="entry name" value="LARGE RIBOSOMAL SUBUNIT PROTEIN UL18"/>
    <property type="match status" value="1"/>
</dbReference>
<dbReference type="PANTHER" id="PTHR23410">
    <property type="entry name" value="RIBOSOMAL PROTEIN L5-RELATED"/>
    <property type="match status" value="1"/>
</dbReference>
<dbReference type="Pfam" id="PF14204">
    <property type="entry name" value="Ribosomal_L18_c"/>
    <property type="match status" value="1"/>
</dbReference>
<dbReference type="Pfam" id="PF17144">
    <property type="entry name" value="Ribosomal_L5e"/>
    <property type="match status" value="1"/>
</dbReference>
<dbReference type="PRINTS" id="PR00058">
    <property type="entry name" value="RIBOSOMALL5"/>
</dbReference>
<dbReference type="SUPFAM" id="SSF53137">
    <property type="entry name" value="Translational machinery components"/>
    <property type="match status" value="1"/>
</dbReference>
<protein>
    <recommendedName>
        <fullName evidence="3">Large ribosomal subunit protein uL18</fullName>
    </recommendedName>
    <alternativeName>
        <fullName>60S ribosomal protein L5</fullName>
    </alternativeName>
</protein>
<gene>
    <name type="primary">RpL5</name>
</gene>
<sequence length="300" mass="34752">MGFVKVVKNKQYFKRYQVKFKRRREGKTDYYARKRLIVQDKNKYDTPKYRLIVRFSNRDITCQVAHSRIEGDKIVCAAYSHELPKYGVKVGLTNYAAAYCTGLLVARRLLKKLGLDRLYEGLKEANGEEYYVEPADEGPNAFRCNLDVGLMKTSTGARVFGAMKGAVDGGFNIPHSVKRFPGYDAEAKEYSAETHRKHILGLHVAEYMRKLEEEDEDAFNRQFSQYIKLGIVADDLENMYKKAHENIRSDPKRDRKPKKDVSKEPKRWNAKKLTNAERKQRVVEAKAAYLKELQGEEMES</sequence>